<sequence length="296" mass="33678">MFKSGFITIVGRPNVGKSTLTNLLMGEKLSIVSNKPQTTRNNIQTILTGEDYQMIFVDTPGIHKPKHKLGEYMVNSATDSIKDVDLVLFLSNPCEEVGRGDKFIIEQLKNQKAPVIFVLNKVDESSPEKVAKTLELFSKEYDFAEMIPISAMKAKNTDKLLELMVKYLPEGPKYYPDDMITDVQERFVVAEIVREKALKNLSQEVPHGIAVDVIQMKQDDNGKYNIEVDLICEKASHKGIIIGKNGQTLKKIGSTARYELERFLRAKVNIKIWVKVRKEWRDNTSLLKELGYKKLK</sequence>
<proteinExistence type="inferred from homology"/>
<protein>
    <recommendedName>
        <fullName evidence="1">GTPase Era</fullName>
    </recommendedName>
</protein>
<reference key="1">
    <citation type="journal article" date="2006" name="Genome Res.">
        <title>Skewed genomic variability in strains of the toxigenic bacterial pathogen, Clostridium perfringens.</title>
        <authorList>
            <person name="Myers G.S.A."/>
            <person name="Rasko D.A."/>
            <person name="Cheung J.K."/>
            <person name="Ravel J."/>
            <person name="Seshadri R."/>
            <person name="DeBoy R.T."/>
            <person name="Ren Q."/>
            <person name="Varga J."/>
            <person name="Awad M.M."/>
            <person name="Brinkac L.M."/>
            <person name="Daugherty S.C."/>
            <person name="Haft D.H."/>
            <person name="Dodson R.J."/>
            <person name="Madupu R."/>
            <person name="Nelson W.C."/>
            <person name="Rosovitz M.J."/>
            <person name="Sullivan S.A."/>
            <person name="Khouri H."/>
            <person name="Dimitrov G.I."/>
            <person name="Watkins K.L."/>
            <person name="Mulligan S."/>
            <person name="Benton J."/>
            <person name="Radune D."/>
            <person name="Fisher D.J."/>
            <person name="Atkins H.S."/>
            <person name="Hiscox T."/>
            <person name="Jost B.H."/>
            <person name="Billington S.J."/>
            <person name="Songer J.G."/>
            <person name="McClane B.A."/>
            <person name="Titball R.W."/>
            <person name="Rood J.I."/>
            <person name="Melville S.B."/>
            <person name="Paulsen I.T."/>
        </authorList>
    </citation>
    <scope>NUCLEOTIDE SEQUENCE [LARGE SCALE GENOMIC DNA]</scope>
    <source>
        <strain>ATCC 13124 / DSM 756 / JCM 1290 / NCIMB 6125 / NCTC 8237 / S 107 / Type A</strain>
    </source>
</reference>
<name>ERA_CLOP1</name>
<keyword id="KW-1003">Cell membrane</keyword>
<keyword id="KW-0963">Cytoplasm</keyword>
<keyword id="KW-0342">GTP-binding</keyword>
<keyword id="KW-0472">Membrane</keyword>
<keyword id="KW-0547">Nucleotide-binding</keyword>
<keyword id="KW-0690">Ribosome biogenesis</keyword>
<keyword id="KW-0694">RNA-binding</keyword>
<keyword id="KW-0699">rRNA-binding</keyword>
<evidence type="ECO:0000255" key="1">
    <source>
        <dbReference type="HAMAP-Rule" id="MF_00367"/>
    </source>
</evidence>
<evidence type="ECO:0000255" key="2">
    <source>
        <dbReference type="PROSITE-ProRule" id="PRU01050"/>
    </source>
</evidence>
<accession>Q0TNU5</accession>
<organism>
    <name type="scientific">Clostridium perfringens (strain ATCC 13124 / DSM 756 / JCM 1290 / NCIMB 6125 / NCTC 8237 / Type A)</name>
    <dbReference type="NCBI Taxonomy" id="195103"/>
    <lineage>
        <taxon>Bacteria</taxon>
        <taxon>Bacillati</taxon>
        <taxon>Bacillota</taxon>
        <taxon>Clostridia</taxon>
        <taxon>Eubacteriales</taxon>
        <taxon>Clostridiaceae</taxon>
        <taxon>Clostridium</taxon>
    </lineage>
</organism>
<dbReference type="EMBL" id="CP000246">
    <property type="protein sequence ID" value="ABG82501.1"/>
    <property type="molecule type" value="Genomic_DNA"/>
</dbReference>
<dbReference type="RefSeq" id="WP_011591023.1">
    <property type="nucleotide sequence ID" value="NC_008261.1"/>
</dbReference>
<dbReference type="SMR" id="Q0TNU5"/>
<dbReference type="STRING" id="195103.CPF_2272"/>
<dbReference type="PaxDb" id="195103-CPF_2272"/>
<dbReference type="GeneID" id="93001447"/>
<dbReference type="KEGG" id="cpf:CPF_2272"/>
<dbReference type="eggNOG" id="COG1159">
    <property type="taxonomic scope" value="Bacteria"/>
</dbReference>
<dbReference type="HOGENOM" id="CLU_038009_1_0_9"/>
<dbReference type="Proteomes" id="UP000001823">
    <property type="component" value="Chromosome"/>
</dbReference>
<dbReference type="GO" id="GO:0005829">
    <property type="term" value="C:cytosol"/>
    <property type="evidence" value="ECO:0007669"/>
    <property type="project" value="TreeGrafter"/>
</dbReference>
<dbReference type="GO" id="GO:0005886">
    <property type="term" value="C:plasma membrane"/>
    <property type="evidence" value="ECO:0007669"/>
    <property type="project" value="UniProtKB-SubCell"/>
</dbReference>
<dbReference type="GO" id="GO:0005525">
    <property type="term" value="F:GTP binding"/>
    <property type="evidence" value="ECO:0007669"/>
    <property type="project" value="UniProtKB-UniRule"/>
</dbReference>
<dbReference type="GO" id="GO:0003924">
    <property type="term" value="F:GTPase activity"/>
    <property type="evidence" value="ECO:0007669"/>
    <property type="project" value="UniProtKB-UniRule"/>
</dbReference>
<dbReference type="GO" id="GO:0043024">
    <property type="term" value="F:ribosomal small subunit binding"/>
    <property type="evidence" value="ECO:0007669"/>
    <property type="project" value="TreeGrafter"/>
</dbReference>
<dbReference type="GO" id="GO:0070181">
    <property type="term" value="F:small ribosomal subunit rRNA binding"/>
    <property type="evidence" value="ECO:0007669"/>
    <property type="project" value="UniProtKB-UniRule"/>
</dbReference>
<dbReference type="GO" id="GO:0000028">
    <property type="term" value="P:ribosomal small subunit assembly"/>
    <property type="evidence" value="ECO:0007669"/>
    <property type="project" value="TreeGrafter"/>
</dbReference>
<dbReference type="CDD" id="cd04163">
    <property type="entry name" value="Era"/>
    <property type="match status" value="1"/>
</dbReference>
<dbReference type="CDD" id="cd22534">
    <property type="entry name" value="KH-II_Era"/>
    <property type="match status" value="1"/>
</dbReference>
<dbReference type="FunFam" id="3.40.50.300:FF:000094">
    <property type="entry name" value="GTPase Era"/>
    <property type="match status" value="1"/>
</dbReference>
<dbReference type="Gene3D" id="3.30.300.20">
    <property type="match status" value="1"/>
</dbReference>
<dbReference type="Gene3D" id="3.40.50.300">
    <property type="entry name" value="P-loop containing nucleotide triphosphate hydrolases"/>
    <property type="match status" value="1"/>
</dbReference>
<dbReference type="HAMAP" id="MF_00367">
    <property type="entry name" value="GTPase_Era"/>
    <property type="match status" value="1"/>
</dbReference>
<dbReference type="InterPro" id="IPR030388">
    <property type="entry name" value="G_ERA_dom"/>
</dbReference>
<dbReference type="InterPro" id="IPR006073">
    <property type="entry name" value="GTP-bd"/>
</dbReference>
<dbReference type="InterPro" id="IPR005662">
    <property type="entry name" value="GTPase_Era-like"/>
</dbReference>
<dbReference type="InterPro" id="IPR015946">
    <property type="entry name" value="KH_dom-like_a/b"/>
</dbReference>
<dbReference type="InterPro" id="IPR004044">
    <property type="entry name" value="KH_dom_type_2"/>
</dbReference>
<dbReference type="InterPro" id="IPR009019">
    <property type="entry name" value="KH_sf_prok-type"/>
</dbReference>
<dbReference type="InterPro" id="IPR027417">
    <property type="entry name" value="P-loop_NTPase"/>
</dbReference>
<dbReference type="InterPro" id="IPR005225">
    <property type="entry name" value="Small_GTP-bd"/>
</dbReference>
<dbReference type="NCBIfam" id="TIGR00436">
    <property type="entry name" value="era"/>
    <property type="match status" value="1"/>
</dbReference>
<dbReference type="NCBIfam" id="NF000908">
    <property type="entry name" value="PRK00089.1"/>
    <property type="match status" value="1"/>
</dbReference>
<dbReference type="NCBIfam" id="TIGR00231">
    <property type="entry name" value="small_GTP"/>
    <property type="match status" value="1"/>
</dbReference>
<dbReference type="PANTHER" id="PTHR42698">
    <property type="entry name" value="GTPASE ERA"/>
    <property type="match status" value="1"/>
</dbReference>
<dbReference type="PANTHER" id="PTHR42698:SF1">
    <property type="entry name" value="GTPASE ERA, MITOCHONDRIAL"/>
    <property type="match status" value="1"/>
</dbReference>
<dbReference type="Pfam" id="PF07650">
    <property type="entry name" value="KH_2"/>
    <property type="match status" value="1"/>
</dbReference>
<dbReference type="Pfam" id="PF01926">
    <property type="entry name" value="MMR_HSR1"/>
    <property type="match status" value="1"/>
</dbReference>
<dbReference type="SUPFAM" id="SSF52540">
    <property type="entry name" value="P-loop containing nucleoside triphosphate hydrolases"/>
    <property type="match status" value="1"/>
</dbReference>
<dbReference type="SUPFAM" id="SSF54814">
    <property type="entry name" value="Prokaryotic type KH domain (KH-domain type II)"/>
    <property type="match status" value="1"/>
</dbReference>
<dbReference type="PROSITE" id="PS51713">
    <property type="entry name" value="G_ERA"/>
    <property type="match status" value="1"/>
</dbReference>
<dbReference type="PROSITE" id="PS50823">
    <property type="entry name" value="KH_TYPE_2"/>
    <property type="match status" value="1"/>
</dbReference>
<feature type="chain" id="PRO_1000079676" description="GTPase Era">
    <location>
        <begin position="1"/>
        <end position="296"/>
    </location>
</feature>
<feature type="domain" description="Era-type G" evidence="2">
    <location>
        <begin position="3"/>
        <end position="170"/>
    </location>
</feature>
<feature type="domain" description="KH type-2" evidence="1">
    <location>
        <begin position="201"/>
        <end position="278"/>
    </location>
</feature>
<feature type="region of interest" description="G1" evidence="2">
    <location>
        <begin position="11"/>
        <end position="18"/>
    </location>
</feature>
<feature type="region of interest" description="G2" evidence="2">
    <location>
        <begin position="37"/>
        <end position="41"/>
    </location>
</feature>
<feature type="region of interest" description="G3" evidence="2">
    <location>
        <begin position="58"/>
        <end position="61"/>
    </location>
</feature>
<feature type="region of interest" description="G4" evidence="2">
    <location>
        <begin position="120"/>
        <end position="123"/>
    </location>
</feature>
<feature type="region of interest" description="G5" evidence="2">
    <location>
        <begin position="149"/>
        <end position="151"/>
    </location>
</feature>
<feature type="binding site" evidence="1">
    <location>
        <begin position="11"/>
        <end position="18"/>
    </location>
    <ligand>
        <name>GTP</name>
        <dbReference type="ChEBI" id="CHEBI:37565"/>
    </ligand>
</feature>
<feature type="binding site" evidence="1">
    <location>
        <begin position="58"/>
        <end position="62"/>
    </location>
    <ligand>
        <name>GTP</name>
        <dbReference type="ChEBI" id="CHEBI:37565"/>
    </ligand>
</feature>
<feature type="binding site" evidence="1">
    <location>
        <begin position="120"/>
        <end position="123"/>
    </location>
    <ligand>
        <name>GTP</name>
        <dbReference type="ChEBI" id="CHEBI:37565"/>
    </ligand>
</feature>
<gene>
    <name evidence="1" type="primary">era</name>
    <name type="ordered locus">CPF_2272</name>
</gene>
<comment type="function">
    <text evidence="1">An essential GTPase that binds both GDP and GTP, with rapid nucleotide exchange. Plays a role in 16S rRNA processing and 30S ribosomal subunit biogenesis and possibly also in cell cycle regulation and energy metabolism.</text>
</comment>
<comment type="subunit">
    <text evidence="1">Monomer.</text>
</comment>
<comment type="subcellular location">
    <subcellularLocation>
        <location>Cytoplasm</location>
    </subcellularLocation>
    <subcellularLocation>
        <location evidence="1">Cell membrane</location>
        <topology evidence="1">Peripheral membrane protein</topology>
    </subcellularLocation>
</comment>
<comment type="similarity">
    <text evidence="1 2">Belongs to the TRAFAC class TrmE-Era-EngA-EngB-Septin-like GTPase superfamily. Era GTPase family.</text>
</comment>